<proteinExistence type="inferred from homology"/>
<reference key="1">
    <citation type="journal article" date="2007" name="PLoS Genet.">
        <title>Patterns and implications of gene gain and loss in the evolution of Prochlorococcus.</title>
        <authorList>
            <person name="Kettler G.C."/>
            <person name="Martiny A.C."/>
            <person name="Huang K."/>
            <person name="Zucker J."/>
            <person name="Coleman M.L."/>
            <person name="Rodrigue S."/>
            <person name="Chen F."/>
            <person name="Lapidus A."/>
            <person name="Ferriera S."/>
            <person name="Johnson J."/>
            <person name="Steglich C."/>
            <person name="Church G.M."/>
            <person name="Richardson P."/>
            <person name="Chisholm S.W."/>
        </authorList>
    </citation>
    <scope>NUCLEOTIDE SEQUENCE [LARGE SCALE GENOMIC DNA]</scope>
    <source>
        <strain>NATL1A</strain>
    </source>
</reference>
<comment type="function">
    <text evidence="1">Catalyzes the conversion of 3-deoxy-D-arabino-heptulosonate 7-phosphate (DAHP) to dehydroquinate (DHQ).</text>
</comment>
<comment type="catalytic activity">
    <reaction evidence="1">
        <text>7-phospho-2-dehydro-3-deoxy-D-arabino-heptonate = 3-dehydroquinate + phosphate</text>
        <dbReference type="Rhea" id="RHEA:21968"/>
        <dbReference type="ChEBI" id="CHEBI:32364"/>
        <dbReference type="ChEBI" id="CHEBI:43474"/>
        <dbReference type="ChEBI" id="CHEBI:58394"/>
        <dbReference type="EC" id="4.2.3.4"/>
    </reaction>
</comment>
<comment type="cofactor">
    <cofactor evidence="1">
        <name>Co(2+)</name>
        <dbReference type="ChEBI" id="CHEBI:48828"/>
    </cofactor>
    <cofactor evidence="1">
        <name>Zn(2+)</name>
        <dbReference type="ChEBI" id="CHEBI:29105"/>
    </cofactor>
    <text evidence="1">Binds 1 divalent metal cation per subunit. Can use either Co(2+) or Zn(2+).</text>
</comment>
<comment type="cofactor">
    <cofactor evidence="1">
        <name>NAD(+)</name>
        <dbReference type="ChEBI" id="CHEBI:57540"/>
    </cofactor>
</comment>
<comment type="pathway">
    <text evidence="1">Metabolic intermediate biosynthesis; chorismate biosynthesis; chorismate from D-erythrose 4-phosphate and phosphoenolpyruvate: step 2/7.</text>
</comment>
<comment type="subcellular location">
    <subcellularLocation>
        <location evidence="1">Cytoplasm</location>
    </subcellularLocation>
</comment>
<comment type="similarity">
    <text evidence="1">Belongs to the sugar phosphate cyclases superfamily. Dehydroquinate synthase family.</text>
</comment>
<gene>
    <name evidence="1" type="primary">aroB</name>
    <name type="ordered locus">NATL1_07421</name>
</gene>
<accession>A2C1E0</accession>
<name>AROB_PROM1</name>
<organism>
    <name type="scientific">Prochlorococcus marinus (strain NATL1A)</name>
    <dbReference type="NCBI Taxonomy" id="167555"/>
    <lineage>
        <taxon>Bacteria</taxon>
        <taxon>Bacillati</taxon>
        <taxon>Cyanobacteriota</taxon>
        <taxon>Cyanophyceae</taxon>
        <taxon>Synechococcales</taxon>
        <taxon>Prochlorococcaceae</taxon>
        <taxon>Prochlorococcus</taxon>
    </lineage>
</organism>
<keyword id="KW-0028">Amino-acid biosynthesis</keyword>
<keyword id="KW-0057">Aromatic amino acid biosynthesis</keyword>
<keyword id="KW-0170">Cobalt</keyword>
<keyword id="KW-0963">Cytoplasm</keyword>
<keyword id="KW-0456">Lyase</keyword>
<keyword id="KW-0479">Metal-binding</keyword>
<keyword id="KW-0520">NAD</keyword>
<keyword id="KW-0547">Nucleotide-binding</keyword>
<keyword id="KW-0862">Zinc</keyword>
<dbReference type="EC" id="4.2.3.4" evidence="1"/>
<dbReference type="EMBL" id="CP000553">
    <property type="protein sequence ID" value="ABM75300.1"/>
    <property type="molecule type" value="Genomic_DNA"/>
</dbReference>
<dbReference type="RefSeq" id="WP_011823456.1">
    <property type="nucleotide sequence ID" value="NC_008819.1"/>
</dbReference>
<dbReference type="SMR" id="A2C1E0"/>
<dbReference type="KEGG" id="pme:NATL1_07421"/>
<dbReference type="eggNOG" id="COG0337">
    <property type="taxonomic scope" value="Bacteria"/>
</dbReference>
<dbReference type="HOGENOM" id="CLU_001201_0_2_3"/>
<dbReference type="UniPathway" id="UPA00053">
    <property type="reaction ID" value="UER00085"/>
</dbReference>
<dbReference type="Proteomes" id="UP000002592">
    <property type="component" value="Chromosome"/>
</dbReference>
<dbReference type="GO" id="GO:0005737">
    <property type="term" value="C:cytoplasm"/>
    <property type="evidence" value="ECO:0007669"/>
    <property type="project" value="UniProtKB-SubCell"/>
</dbReference>
<dbReference type="GO" id="GO:0003856">
    <property type="term" value="F:3-dehydroquinate synthase activity"/>
    <property type="evidence" value="ECO:0007669"/>
    <property type="project" value="UniProtKB-UniRule"/>
</dbReference>
<dbReference type="GO" id="GO:0046872">
    <property type="term" value="F:metal ion binding"/>
    <property type="evidence" value="ECO:0007669"/>
    <property type="project" value="UniProtKB-KW"/>
</dbReference>
<dbReference type="GO" id="GO:0000166">
    <property type="term" value="F:nucleotide binding"/>
    <property type="evidence" value="ECO:0007669"/>
    <property type="project" value="UniProtKB-KW"/>
</dbReference>
<dbReference type="GO" id="GO:0008652">
    <property type="term" value="P:amino acid biosynthetic process"/>
    <property type="evidence" value="ECO:0007669"/>
    <property type="project" value="UniProtKB-KW"/>
</dbReference>
<dbReference type="GO" id="GO:0009073">
    <property type="term" value="P:aromatic amino acid family biosynthetic process"/>
    <property type="evidence" value="ECO:0007669"/>
    <property type="project" value="UniProtKB-KW"/>
</dbReference>
<dbReference type="GO" id="GO:0009423">
    <property type="term" value="P:chorismate biosynthetic process"/>
    <property type="evidence" value="ECO:0007669"/>
    <property type="project" value="UniProtKB-UniRule"/>
</dbReference>
<dbReference type="CDD" id="cd08195">
    <property type="entry name" value="DHQS"/>
    <property type="match status" value="1"/>
</dbReference>
<dbReference type="FunFam" id="3.40.50.1970:FF:000007">
    <property type="entry name" value="Pentafunctional AROM polypeptide"/>
    <property type="match status" value="1"/>
</dbReference>
<dbReference type="Gene3D" id="3.40.50.1970">
    <property type="match status" value="1"/>
</dbReference>
<dbReference type="Gene3D" id="1.20.1090.10">
    <property type="entry name" value="Dehydroquinate synthase-like - alpha domain"/>
    <property type="match status" value="1"/>
</dbReference>
<dbReference type="HAMAP" id="MF_00110">
    <property type="entry name" value="DHQ_synthase"/>
    <property type="match status" value="1"/>
</dbReference>
<dbReference type="InterPro" id="IPR050071">
    <property type="entry name" value="Dehydroquinate_synthase"/>
</dbReference>
<dbReference type="InterPro" id="IPR016037">
    <property type="entry name" value="DHQ_synth_AroB"/>
</dbReference>
<dbReference type="InterPro" id="IPR030963">
    <property type="entry name" value="DHQ_synth_fam"/>
</dbReference>
<dbReference type="InterPro" id="IPR030960">
    <property type="entry name" value="DHQS/DOIS_N"/>
</dbReference>
<dbReference type="InterPro" id="IPR056179">
    <property type="entry name" value="DHQS_C"/>
</dbReference>
<dbReference type="NCBIfam" id="TIGR01357">
    <property type="entry name" value="aroB"/>
    <property type="match status" value="1"/>
</dbReference>
<dbReference type="PANTHER" id="PTHR43622">
    <property type="entry name" value="3-DEHYDROQUINATE SYNTHASE"/>
    <property type="match status" value="1"/>
</dbReference>
<dbReference type="PANTHER" id="PTHR43622:SF7">
    <property type="entry name" value="3-DEHYDROQUINATE SYNTHASE, CHLOROPLASTIC"/>
    <property type="match status" value="1"/>
</dbReference>
<dbReference type="Pfam" id="PF01761">
    <property type="entry name" value="DHQ_synthase"/>
    <property type="match status" value="1"/>
</dbReference>
<dbReference type="Pfam" id="PF24621">
    <property type="entry name" value="DHQS_C"/>
    <property type="match status" value="1"/>
</dbReference>
<dbReference type="PIRSF" id="PIRSF001455">
    <property type="entry name" value="DHQ_synth"/>
    <property type="match status" value="1"/>
</dbReference>
<dbReference type="SUPFAM" id="SSF56796">
    <property type="entry name" value="Dehydroquinate synthase-like"/>
    <property type="match status" value="1"/>
</dbReference>
<feature type="chain" id="PRO_1000094561" description="3-dehydroquinate synthase">
    <location>
        <begin position="1"/>
        <end position="368"/>
    </location>
</feature>
<feature type="binding site" evidence="1">
    <location>
        <begin position="112"/>
        <end position="116"/>
    </location>
    <ligand>
        <name>NAD(+)</name>
        <dbReference type="ChEBI" id="CHEBI:57540"/>
    </ligand>
</feature>
<feature type="binding site" evidence="1">
    <location>
        <begin position="136"/>
        <end position="137"/>
    </location>
    <ligand>
        <name>NAD(+)</name>
        <dbReference type="ChEBI" id="CHEBI:57540"/>
    </ligand>
</feature>
<feature type="binding site" evidence="1">
    <location>
        <position position="149"/>
    </location>
    <ligand>
        <name>NAD(+)</name>
        <dbReference type="ChEBI" id="CHEBI:57540"/>
    </ligand>
</feature>
<feature type="binding site" evidence="1">
    <location>
        <position position="158"/>
    </location>
    <ligand>
        <name>NAD(+)</name>
        <dbReference type="ChEBI" id="CHEBI:57540"/>
    </ligand>
</feature>
<feature type="binding site" evidence="1">
    <location>
        <position position="191"/>
    </location>
    <ligand>
        <name>Zn(2+)</name>
        <dbReference type="ChEBI" id="CHEBI:29105"/>
    </ligand>
</feature>
<feature type="binding site" evidence="1">
    <location>
        <position position="256"/>
    </location>
    <ligand>
        <name>Zn(2+)</name>
        <dbReference type="ChEBI" id="CHEBI:29105"/>
    </ligand>
</feature>
<feature type="binding site" evidence="1">
    <location>
        <position position="273"/>
    </location>
    <ligand>
        <name>Zn(2+)</name>
        <dbReference type="ChEBI" id="CHEBI:29105"/>
    </ligand>
</feature>
<evidence type="ECO:0000255" key="1">
    <source>
        <dbReference type="HAMAP-Rule" id="MF_00110"/>
    </source>
</evidence>
<protein>
    <recommendedName>
        <fullName evidence="1">3-dehydroquinate synthase</fullName>
        <shortName evidence="1">DHQS</shortName>
        <ecNumber evidence="1">4.2.3.4</ecNumber>
    </recommendedName>
</protein>
<sequence>MNKDNHHIKVSLTNNPYEIVIGKNSLESIGDELFNIGFREGLKVLVVSNKEVSDHYGDCIIKSLIKSKFKPKLLIIKAGEDQKNQSSIDLIHNAAYEARLERGSLMIALGGGVIGDMTGFAAATWLRGVNVVQIPTTLLAMVDASIGGKTGINHSKGKNLIGAFHQPRLVLIDPKTLISLPSREFKAGMAEIIKYGVISDLELFDLLERQENIADLSNIKEKLLLEIIKRSAKSKAEIVIKDEKESGVRAFLNYGHTFGHVIENLCGYGKWLHGEAVAMGMVAVGQLAVQRGLWNEDNAKRQKRLIEKAGLPSNWPKLDIESVLSSLQGDKKVKNGKVSFVMPLKIGDVKLFNNISNKEIRECLQKIS</sequence>